<sequence length="302" mass="34150">MSVPDATVVKAFLLDLQNRICAGLEQLDGQASFAADSWTRTEGGGGTSRVLTQGAVFEQAGVNFSHVTGAAMPASATAHRPELAGRSFEAMGVSLVIHPKNPYIPTTHANVRFFIAHKDGADPVWWFGGGFDLTPYYPFEEDVREWHQTAKNLCLPFGDDIYPKYKKWCDEYFFLPHRNETRGVGGLFFDDLNQAGFDKSFDFMQAVGNGFLTAYAPIVERRKETPYGEREREFQLYRRGRYVEFNLVYDRGTLFGLQTGGRTESILMSMPPLVRWQYAYTPEAGSPEADLYDNYLKPRDWV</sequence>
<evidence type="ECO:0000255" key="1">
    <source>
        <dbReference type="HAMAP-Rule" id="MF_00333"/>
    </source>
</evidence>
<comment type="function">
    <text evidence="1">Involved in the heme biosynthesis. Catalyzes the aerobic oxidative decarboxylation of propionate groups of rings A and B of coproporphyrinogen-III to yield the vinyl groups in protoporphyrinogen-IX.</text>
</comment>
<comment type="catalytic activity">
    <reaction evidence="1">
        <text>coproporphyrinogen III + O2 + 2 H(+) = protoporphyrinogen IX + 2 CO2 + 2 H2O</text>
        <dbReference type="Rhea" id="RHEA:18257"/>
        <dbReference type="ChEBI" id="CHEBI:15377"/>
        <dbReference type="ChEBI" id="CHEBI:15378"/>
        <dbReference type="ChEBI" id="CHEBI:15379"/>
        <dbReference type="ChEBI" id="CHEBI:16526"/>
        <dbReference type="ChEBI" id="CHEBI:57307"/>
        <dbReference type="ChEBI" id="CHEBI:57309"/>
        <dbReference type="EC" id="1.3.3.3"/>
    </reaction>
</comment>
<comment type="cofactor">
    <cofactor evidence="1">
        <name>a divalent metal cation</name>
        <dbReference type="ChEBI" id="CHEBI:60240"/>
    </cofactor>
</comment>
<comment type="pathway">
    <text evidence="1">Porphyrin-containing compound metabolism; protoporphyrin-IX biosynthesis; protoporphyrinogen-IX from coproporphyrinogen-III (O2 route): step 1/1.</text>
</comment>
<comment type="subunit">
    <text evidence="1">Homodimer.</text>
</comment>
<comment type="subcellular location">
    <subcellularLocation>
        <location evidence="1">Cytoplasm</location>
    </subcellularLocation>
</comment>
<comment type="similarity">
    <text evidence="1">Belongs to the aerobic coproporphyrinogen-III oxidase family.</text>
</comment>
<gene>
    <name evidence="1" type="primary">hemF</name>
    <name type="ordered locus">Shewmr4_0035</name>
</gene>
<reference key="1">
    <citation type="submission" date="2006-08" db="EMBL/GenBank/DDBJ databases">
        <title>Complete sequence of Shewanella sp. MR-4.</title>
        <authorList>
            <consortium name="US DOE Joint Genome Institute"/>
            <person name="Copeland A."/>
            <person name="Lucas S."/>
            <person name="Lapidus A."/>
            <person name="Barry K."/>
            <person name="Detter J.C."/>
            <person name="Glavina del Rio T."/>
            <person name="Hammon N."/>
            <person name="Israni S."/>
            <person name="Dalin E."/>
            <person name="Tice H."/>
            <person name="Pitluck S."/>
            <person name="Kiss H."/>
            <person name="Brettin T."/>
            <person name="Bruce D."/>
            <person name="Han C."/>
            <person name="Tapia R."/>
            <person name="Gilna P."/>
            <person name="Schmutz J."/>
            <person name="Larimer F."/>
            <person name="Land M."/>
            <person name="Hauser L."/>
            <person name="Kyrpides N."/>
            <person name="Mikhailova N."/>
            <person name="Nealson K."/>
            <person name="Konstantinidis K."/>
            <person name="Klappenbach J."/>
            <person name="Tiedje J."/>
            <person name="Richardson P."/>
        </authorList>
    </citation>
    <scope>NUCLEOTIDE SEQUENCE [LARGE SCALE GENOMIC DNA]</scope>
    <source>
        <strain>MR-4</strain>
    </source>
</reference>
<accession>Q0HPA0</accession>
<protein>
    <recommendedName>
        <fullName evidence="1">Oxygen-dependent coproporphyrinogen-III oxidase</fullName>
        <shortName evidence="1">CPO</shortName>
        <shortName evidence="1">Coprogen oxidase</shortName>
        <shortName evidence="1">Coproporphyrinogenase</shortName>
        <ecNumber evidence="1">1.3.3.3</ecNumber>
    </recommendedName>
</protein>
<proteinExistence type="inferred from homology"/>
<keyword id="KW-0963">Cytoplasm</keyword>
<keyword id="KW-0350">Heme biosynthesis</keyword>
<keyword id="KW-0479">Metal-binding</keyword>
<keyword id="KW-0560">Oxidoreductase</keyword>
<keyword id="KW-0627">Porphyrin biosynthesis</keyword>
<name>HEM6_SHESM</name>
<dbReference type="EC" id="1.3.3.3" evidence="1"/>
<dbReference type="EMBL" id="CP000446">
    <property type="protein sequence ID" value="ABI37117.1"/>
    <property type="molecule type" value="Genomic_DNA"/>
</dbReference>
<dbReference type="RefSeq" id="WP_011620871.1">
    <property type="nucleotide sequence ID" value="NC_008321.1"/>
</dbReference>
<dbReference type="SMR" id="Q0HPA0"/>
<dbReference type="KEGG" id="she:Shewmr4_0035"/>
<dbReference type="HOGENOM" id="CLU_026169_0_1_6"/>
<dbReference type="UniPathway" id="UPA00251">
    <property type="reaction ID" value="UER00322"/>
</dbReference>
<dbReference type="GO" id="GO:0005737">
    <property type="term" value="C:cytoplasm"/>
    <property type="evidence" value="ECO:0007669"/>
    <property type="project" value="UniProtKB-SubCell"/>
</dbReference>
<dbReference type="GO" id="GO:0004109">
    <property type="term" value="F:coproporphyrinogen oxidase activity"/>
    <property type="evidence" value="ECO:0007669"/>
    <property type="project" value="UniProtKB-UniRule"/>
</dbReference>
<dbReference type="GO" id="GO:0046872">
    <property type="term" value="F:metal ion binding"/>
    <property type="evidence" value="ECO:0007669"/>
    <property type="project" value="UniProtKB-KW"/>
</dbReference>
<dbReference type="GO" id="GO:0042803">
    <property type="term" value="F:protein homodimerization activity"/>
    <property type="evidence" value="ECO:0000250"/>
    <property type="project" value="UniProtKB"/>
</dbReference>
<dbReference type="GO" id="GO:0006782">
    <property type="term" value="P:protoporphyrinogen IX biosynthetic process"/>
    <property type="evidence" value="ECO:0007669"/>
    <property type="project" value="UniProtKB-UniRule"/>
</dbReference>
<dbReference type="FunFam" id="3.40.1500.10:FF:000001">
    <property type="entry name" value="Oxygen-dependent coproporphyrinogen-III oxidase"/>
    <property type="match status" value="1"/>
</dbReference>
<dbReference type="Gene3D" id="3.40.1500.10">
    <property type="entry name" value="Coproporphyrinogen III oxidase, aerobic"/>
    <property type="match status" value="1"/>
</dbReference>
<dbReference type="HAMAP" id="MF_00333">
    <property type="entry name" value="Coprogen_oxidas"/>
    <property type="match status" value="1"/>
</dbReference>
<dbReference type="InterPro" id="IPR001260">
    <property type="entry name" value="Coprogen_oxidase_aer"/>
</dbReference>
<dbReference type="InterPro" id="IPR036406">
    <property type="entry name" value="Coprogen_oxidase_aer_sf"/>
</dbReference>
<dbReference type="InterPro" id="IPR018375">
    <property type="entry name" value="Coprogen_oxidase_CS"/>
</dbReference>
<dbReference type="NCBIfam" id="NF003727">
    <property type="entry name" value="PRK05330.1"/>
    <property type="match status" value="1"/>
</dbReference>
<dbReference type="PANTHER" id="PTHR10755">
    <property type="entry name" value="COPROPORPHYRINOGEN III OXIDASE, MITOCHONDRIAL"/>
    <property type="match status" value="1"/>
</dbReference>
<dbReference type="PANTHER" id="PTHR10755:SF0">
    <property type="entry name" value="OXYGEN-DEPENDENT COPROPORPHYRINOGEN-III OXIDASE, MITOCHONDRIAL"/>
    <property type="match status" value="1"/>
</dbReference>
<dbReference type="Pfam" id="PF01218">
    <property type="entry name" value="Coprogen_oxidas"/>
    <property type="match status" value="1"/>
</dbReference>
<dbReference type="PIRSF" id="PIRSF000166">
    <property type="entry name" value="Coproporphyri_ox"/>
    <property type="match status" value="1"/>
</dbReference>
<dbReference type="PRINTS" id="PR00073">
    <property type="entry name" value="COPRGNOXDASE"/>
</dbReference>
<dbReference type="SUPFAM" id="SSF102886">
    <property type="entry name" value="Coproporphyrinogen III oxidase"/>
    <property type="match status" value="1"/>
</dbReference>
<dbReference type="PROSITE" id="PS01021">
    <property type="entry name" value="COPROGEN_OXIDASE"/>
    <property type="match status" value="1"/>
</dbReference>
<organism>
    <name type="scientific">Shewanella sp. (strain MR-4)</name>
    <dbReference type="NCBI Taxonomy" id="60480"/>
    <lineage>
        <taxon>Bacteria</taxon>
        <taxon>Pseudomonadati</taxon>
        <taxon>Pseudomonadota</taxon>
        <taxon>Gammaproteobacteria</taxon>
        <taxon>Alteromonadales</taxon>
        <taxon>Shewanellaceae</taxon>
        <taxon>Shewanella</taxon>
    </lineage>
</organism>
<feature type="chain" id="PRO_1000019502" description="Oxygen-dependent coproporphyrinogen-III oxidase">
    <location>
        <begin position="1"/>
        <end position="302"/>
    </location>
</feature>
<feature type="region of interest" description="Important for dimerization" evidence="1">
    <location>
        <begin position="242"/>
        <end position="277"/>
    </location>
</feature>
<feature type="active site" description="Proton donor" evidence="1">
    <location>
        <position position="108"/>
    </location>
</feature>
<feature type="binding site" evidence="1">
    <location>
        <position position="94"/>
    </location>
    <ligand>
        <name>substrate</name>
    </ligand>
</feature>
<feature type="binding site" evidence="1">
    <location>
        <position position="98"/>
    </location>
    <ligand>
        <name>a divalent metal cation</name>
        <dbReference type="ChEBI" id="CHEBI:60240"/>
    </ligand>
</feature>
<feature type="binding site" evidence="1">
    <location>
        <position position="108"/>
    </location>
    <ligand>
        <name>a divalent metal cation</name>
        <dbReference type="ChEBI" id="CHEBI:60240"/>
    </ligand>
</feature>
<feature type="binding site" evidence="1">
    <location>
        <begin position="110"/>
        <end position="112"/>
    </location>
    <ligand>
        <name>substrate</name>
    </ligand>
</feature>
<feature type="binding site" evidence="1">
    <location>
        <position position="147"/>
    </location>
    <ligand>
        <name>a divalent metal cation</name>
        <dbReference type="ChEBI" id="CHEBI:60240"/>
    </ligand>
</feature>
<feature type="binding site" evidence="1">
    <location>
        <position position="177"/>
    </location>
    <ligand>
        <name>a divalent metal cation</name>
        <dbReference type="ChEBI" id="CHEBI:60240"/>
    </ligand>
</feature>
<feature type="binding site" evidence="1">
    <location>
        <begin position="260"/>
        <end position="262"/>
    </location>
    <ligand>
        <name>substrate</name>
    </ligand>
</feature>
<feature type="site" description="Important for dimerization" evidence="1">
    <location>
        <position position="177"/>
    </location>
</feature>